<feature type="chain" id="PRO_1000186410" description="Bifunctional protein GlmU">
    <location>
        <begin position="1"/>
        <end position="454"/>
    </location>
</feature>
<feature type="region of interest" description="Pyrophosphorylase" evidence="1">
    <location>
        <begin position="1"/>
        <end position="232"/>
    </location>
</feature>
<feature type="region of interest" description="Linker" evidence="1">
    <location>
        <begin position="233"/>
        <end position="253"/>
    </location>
</feature>
<feature type="region of interest" description="N-acetyltransferase" evidence="1">
    <location>
        <begin position="254"/>
        <end position="454"/>
    </location>
</feature>
<feature type="active site" description="Proton acceptor" evidence="1">
    <location>
        <position position="349"/>
    </location>
</feature>
<feature type="binding site" evidence="1">
    <location>
        <begin position="11"/>
        <end position="14"/>
    </location>
    <ligand>
        <name>UDP-N-acetyl-alpha-D-glucosamine</name>
        <dbReference type="ChEBI" id="CHEBI:57705"/>
    </ligand>
</feature>
<feature type="binding site" evidence="1">
    <location>
        <position position="25"/>
    </location>
    <ligand>
        <name>UDP-N-acetyl-alpha-D-glucosamine</name>
        <dbReference type="ChEBI" id="CHEBI:57705"/>
    </ligand>
</feature>
<feature type="binding site" evidence="1">
    <location>
        <position position="78"/>
    </location>
    <ligand>
        <name>UDP-N-acetyl-alpha-D-glucosamine</name>
        <dbReference type="ChEBI" id="CHEBI:57705"/>
    </ligand>
</feature>
<feature type="binding site" evidence="1">
    <location>
        <begin position="83"/>
        <end position="84"/>
    </location>
    <ligand>
        <name>UDP-N-acetyl-alpha-D-glucosamine</name>
        <dbReference type="ChEBI" id="CHEBI:57705"/>
    </ligand>
</feature>
<feature type="binding site" evidence="1">
    <location>
        <position position="108"/>
    </location>
    <ligand>
        <name>Mg(2+)</name>
        <dbReference type="ChEBI" id="CHEBI:18420"/>
    </ligand>
</feature>
<feature type="binding site" evidence="1">
    <location>
        <position position="144"/>
    </location>
    <ligand>
        <name>UDP-N-acetyl-alpha-D-glucosamine</name>
        <dbReference type="ChEBI" id="CHEBI:57705"/>
    </ligand>
</feature>
<feature type="binding site" evidence="1">
    <location>
        <position position="158"/>
    </location>
    <ligand>
        <name>UDP-N-acetyl-alpha-D-glucosamine</name>
        <dbReference type="ChEBI" id="CHEBI:57705"/>
    </ligand>
</feature>
<feature type="binding site" evidence="1">
    <location>
        <position position="173"/>
    </location>
    <ligand>
        <name>UDP-N-acetyl-alpha-D-glucosamine</name>
        <dbReference type="ChEBI" id="CHEBI:57705"/>
    </ligand>
</feature>
<feature type="binding site" evidence="1">
    <location>
        <position position="230"/>
    </location>
    <ligand>
        <name>Mg(2+)</name>
        <dbReference type="ChEBI" id="CHEBI:18420"/>
    </ligand>
</feature>
<feature type="binding site" evidence="1">
    <location>
        <position position="230"/>
    </location>
    <ligand>
        <name>UDP-N-acetyl-alpha-D-glucosamine</name>
        <dbReference type="ChEBI" id="CHEBI:57705"/>
    </ligand>
</feature>
<feature type="binding site" evidence="1">
    <location>
        <position position="319"/>
    </location>
    <ligand>
        <name>UDP-N-acetyl-alpha-D-glucosamine</name>
        <dbReference type="ChEBI" id="CHEBI:57705"/>
    </ligand>
</feature>
<feature type="binding site" evidence="1">
    <location>
        <position position="337"/>
    </location>
    <ligand>
        <name>UDP-N-acetyl-alpha-D-glucosamine</name>
        <dbReference type="ChEBI" id="CHEBI:57705"/>
    </ligand>
</feature>
<feature type="binding site" evidence="1">
    <location>
        <position position="352"/>
    </location>
    <ligand>
        <name>UDP-N-acetyl-alpha-D-glucosamine</name>
        <dbReference type="ChEBI" id="CHEBI:57705"/>
    </ligand>
</feature>
<feature type="binding site" evidence="1">
    <location>
        <position position="363"/>
    </location>
    <ligand>
        <name>UDP-N-acetyl-alpha-D-glucosamine</name>
        <dbReference type="ChEBI" id="CHEBI:57705"/>
    </ligand>
</feature>
<feature type="binding site" evidence="1">
    <location>
        <position position="366"/>
    </location>
    <ligand>
        <name>acetyl-CoA</name>
        <dbReference type="ChEBI" id="CHEBI:57288"/>
    </ligand>
</feature>
<feature type="binding site" evidence="1">
    <location>
        <begin position="372"/>
        <end position="373"/>
    </location>
    <ligand>
        <name>acetyl-CoA</name>
        <dbReference type="ChEBI" id="CHEBI:57288"/>
    </ligand>
</feature>
<feature type="binding site" evidence="1">
    <location>
        <position position="391"/>
    </location>
    <ligand>
        <name>acetyl-CoA</name>
        <dbReference type="ChEBI" id="CHEBI:57288"/>
    </ligand>
</feature>
<feature type="binding site" evidence="1">
    <location>
        <position position="409"/>
    </location>
    <ligand>
        <name>acetyl-CoA</name>
        <dbReference type="ChEBI" id="CHEBI:57288"/>
    </ligand>
</feature>
<feature type="binding site" evidence="1">
    <location>
        <position position="426"/>
    </location>
    <ligand>
        <name>acetyl-CoA</name>
        <dbReference type="ChEBI" id="CHEBI:57288"/>
    </ligand>
</feature>
<evidence type="ECO:0000255" key="1">
    <source>
        <dbReference type="HAMAP-Rule" id="MF_01631"/>
    </source>
</evidence>
<sequence>MTDRTCLSIVLAAGEGTRMKSNLPKVLHRVAGLPLVCHVVNAVRGTGKSDVALVVGRGAEDVRSAVEKIAGPVSAFEQKERLGTAHAVLAAHEAIARGYDDLLIVFGDTPLIEAQSLLAARERLAQGADLVVIGFRPASPHGYGRLIEEGGQLVAIIEEKEATDEQKKIGFCNGGLMALRGQHALALLDAVGNDNAKGEYYLTDIVAIAHGKGLNVTAIEVPVDNVIGINNRAELAEAETIWQNRKRRELMLSGVTLIAPETVFFSYDTVIEPDVVIEPNVFFGPSVHVASGALIHSFSHLEGAQVGEKAEIGPFARLRPGADLAEKSKVGNFCEVKNAKVGKGAKINHLAYIGDAVIGASSNIGAGTITCNYDGYNKFKTIIGDNAFIGSNSSLVAPVEIGDNAYIASGSVITADVPADALALGRARQETKEGRAKILREKYAAIKAAKSVSK</sequence>
<comment type="function">
    <text evidence="1">Catalyzes the last two sequential reactions in the de novo biosynthetic pathway for UDP-N-acetylglucosamine (UDP-GlcNAc). The C-terminal domain catalyzes the transfer of acetyl group from acetyl coenzyme A to glucosamine-1-phosphate (GlcN-1-P) to produce N-acetylglucosamine-1-phosphate (GlcNAc-1-P), which is converted into UDP-GlcNAc by the transfer of uridine 5-monophosphate (from uridine 5-triphosphate), a reaction catalyzed by the N-terminal domain.</text>
</comment>
<comment type="catalytic activity">
    <reaction evidence="1">
        <text>alpha-D-glucosamine 1-phosphate + acetyl-CoA = N-acetyl-alpha-D-glucosamine 1-phosphate + CoA + H(+)</text>
        <dbReference type="Rhea" id="RHEA:13725"/>
        <dbReference type="ChEBI" id="CHEBI:15378"/>
        <dbReference type="ChEBI" id="CHEBI:57287"/>
        <dbReference type="ChEBI" id="CHEBI:57288"/>
        <dbReference type="ChEBI" id="CHEBI:57776"/>
        <dbReference type="ChEBI" id="CHEBI:58516"/>
        <dbReference type="EC" id="2.3.1.157"/>
    </reaction>
</comment>
<comment type="catalytic activity">
    <reaction evidence="1">
        <text>N-acetyl-alpha-D-glucosamine 1-phosphate + UTP + H(+) = UDP-N-acetyl-alpha-D-glucosamine + diphosphate</text>
        <dbReference type="Rhea" id="RHEA:13509"/>
        <dbReference type="ChEBI" id="CHEBI:15378"/>
        <dbReference type="ChEBI" id="CHEBI:33019"/>
        <dbReference type="ChEBI" id="CHEBI:46398"/>
        <dbReference type="ChEBI" id="CHEBI:57705"/>
        <dbReference type="ChEBI" id="CHEBI:57776"/>
        <dbReference type="EC" id="2.7.7.23"/>
    </reaction>
</comment>
<comment type="cofactor">
    <cofactor evidence="1">
        <name>Mg(2+)</name>
        <dbReference type="ChEBI" id="CHEBI:18420"/>
    </cofactor>
    <text evidence="1">Binds 1 Mg(2+) ion per subunit.</text>
</comment>
<comment type="pathway">
    <text evidence="1">Nucleotide-sugar biosynthesis; UDP-N-acetyl-alpha-D-glucosamine biosynthesis; N-acetyl-alpha-D-glucosamine 1-phosphate from alpha-D-glucosamine 6-phosphate (route II): step 2/2.</text>
</comment>
<comment type="pathway">
    <text evidence="1">Nucleotide-sugar biosynthesis; UDP-N-acetyl-alpha-D-glucosamine biosynthesis; UDP-N-acetyl-alpha-D-glucosamine from N-acetyl-alpha-D-glucosamine 1-phosphate: step 1/1.</text>
</comment>
<comment type="pathway">
    <text evidence="1">Bacterial outer membrane biogenesis; LPS lipid A biosynthesis.</text>
</comment>
<comment type="subunit">
    <text evidence="1">Homotrimer.</text>
</comment>
<comment type="subcellular location">
    <subcellularLocation>
        <location evidence="1">Cytoplasm</location>
    </subcellularLocation>
</comment>
<comment type="similarity">
    <text evidence="1">In the N-terminal section; belongs to the N-acetylglucosamine-1-phosphate uridyltransferase family.</text>
</comment>
<comment type="similarity">
    <text evidence="1">In the C-terminal section; belongs to the transferase hexapeptide repeat family.</text>
</comment>
<reference key="1">
    <citation type="journal article" date="2008" name="PLoS ONE">
        <title>Genome sequence of Brucella abortus vaccine strain S19 compared to virulent strains yields candidate virulence genes.</title>
        <authorList>
            <person name="Crasta O.R."/>
            <person name="Folkerts O."/>
            <person name="Fei Z."/>
            <person name="Mane S.P."/>
            <person name="Evans C."/>
            <person name="Martino-Catt S."/>
            <person name="Bricker B."/>
            <person name="Yu G."/>
            <person name="Du L."/>
            <person name="Sobral B.W."/>
        </authorList>
    </citation>
    <scope>NUCLEOTIDE SEQUENCE [LARGE SCALE GENOMIC DNA]</scope>
    <source>
        <strain>S19</strain>
    </source>
</reference>
<organism>
    <name type="scientific">Brucella abortus (strain S19)</name>
    <dbReference type="NCBI Taxonomy" id="430066"/>
    <lineage>
        <taxon>Bacteria</taxon>
        <taxon>Pseudomonadati</taxon>
        <taxon>Pseudomonadota</taxon>
        <taxon>Alphaproteobacteria</taxon>
        <taxon>Hyphomicrobiales</taxon>
        <taxon>Brucellaceae</taxon>
        <taxon>Brucella/Ochrobactrum group</taxon>
        <taxon>Brucella</taxon>
    </lineage>
</organism>
<gene>
    <name evidence="1" type="primary">glmU</name>
    <name type="ordered locus">BAbS19_II06140</name>
</gene>
<name>GLMU_BRUA1</name>
<keyword id="KW-0012">Acyltransferase</keyword>
<keyword id="KW-0133">Cell shape</keyword>
<keyword id="KW-0961">Cell wall biogenesis/degradation</keyword>
<keyword id="KW-0963">Cytoplasm</keyword>
<keyword id="KW-0460">Magnesium</keyword>
<keyword id="KW-0479">Metal-binding</keyword>
<keyword id="KW-0511">Multifunctional enzyme</keyword>
<keyword id="KW-0548">Nucleotidyltransferase</keyword>
<keyword id="KW-0573">Peptidoglycan synthesis</keyword>
<keyword id="KW-0677">Repeat</keyword>
<keyword id="KW-0808">Transferase</keyword>
<accession>B2SB72</accession>
<protein>
    <recommendedName>
        <fullName evidence="1">Bifunctional protein GlmU</fullName>
    </recommendedName>
    <domain>
        <recommendedName>
            <fullName evidence="1">UDP-N-acetylglucosamine pyrophosphorylase</fullName>
            <ecNumber evidence="1">2.7.7.23</ecNumber>
        </recommendedName>
        <alternativeName>
            <fullName evidence="1">N-acetylglucosamine-1-phosphate uridyltransferase</fullName>
        </alternativeName>
    </domain>
    <domain>
        <recommendedName>
            <fullName evidence="1">Glucosamine-1-phosphate N-acetyltransferase</fullName>
            <ecNumber evidence="1">2.3.1.157</ecNumber>
        </recommendedName>
    </domain>
</protein>
<dbReference type="EC" id="2.7.7.23" evidence="1"/>
<dbReference type="EC" id="2.3.1.157" evidence="1"/>
<dbReference type="EMBL" id="CP000888">
    <property type="protein sequence ID" value="ACD74109.1"/>
    <property type="molecule type" value="Genomic_DNA"/>
</dbReference>
<dbReference type="RefSeq" id="WP_002966051.1">
    <property type="nucleotide sequence ID" value="NC_010740.1"/>
</dbReference>
<dbReference type="SMR" id="B2SB72"/>
<dbReference type="GeneID" id="93015456"/>
<dbReference type="KEGG" id="bmc:BAbS19_II06140"/>
<dbReference type="HOGENOM" id="CLU_029499_15_2_5"/>
<dbReference type="UniPathway" id="UPA00113">
    <property type="reaction ID" value="UER00532"/>
</dbReference>
<dbReference type="UniPathway" id="UPA00113">
    <property type="reaction ID" value="UER00533"/>
</dbReference>
<dbReference type="UniPathway" id="UPA00973"/>
<dbReference type="Proteomes" id="UP000002565">
    <property type="component" value="Chromosome 2"/>
</dbReference>
<dbReference type="GO" id="GO:0005737">
    <property type="term" value="C:cytoplasm"/>
    <property type="evidence" value="ECO:0007669"/>
    <property type="project" value="UniProtKB-SubCell"/>
</dbReference>
<dbReference type="GO" id="GO:0016020">
    <property type="term" value="C:membrane"/>
    <property type="evidence" value="ECO:0007669"/>
    <property type="project" value="GOC"/>
</dbReference>
<dbReference type="GO" id="GO:0019134">
    <property type="term" value="F:glucosamine-1-phosphate N-acetyltransferase activity"/>
    <property type="evidence" value="ECO:0007669"/>
    <property type="project" value="UniProtKB-UniRule"/>
</dbReference>
<dbReference type="GO" id="GO:0000287">
    <property type="term" value="F:magnesium ion binding"/>
    <property type="evidence" value="ECO:0007669"/>
    <property type="project" value="UniProtKB-UniRule"/>
</dbReference>
<dbReference type="GO" id="GO:0003977">
    <property type="term" value="F:UDP-N-acetylglucosamine diphosphorylase activity"/>
    <property type="evidence" value="ECO:0007669"/>
    <property type="project" value="UniProtKB-UniRule"/>
</dbReference>
<dbReference type="GO" id="GO:0000902">
    <property type="term" value="P:cell morphogenesis"/>
    <property type="evidence" value="ECO:0007669"/>
    <property type="project" value="UniProtKB-UniRule"/>
</dbReference>
<dbReference type="GO" id="GO:0071555">
    <property type="term" value="P:cell wall organization"/>
    <property type="evidence" value="ECO:0007669"/>
    <property type="project" value="UniProtKB-KW"/>
</dbReference>
<dbReference type="GO" id="GO:0009245">
    <property type="term" value="P:lipid A biosynthetic process"/>
    <property type="evidence" value="ECO:0007669"/>
    <property type="project" value="UniProtKB-UniRule"/>
</dbReference>
<dbReference type="GO" id="GO:0009252">
    <property type="term" value="P:peptidoglycan biosynthetic process"/>
    <property type="evidence" value="ECO:0007669"/>
    <property type="project" value="UniProtKB-UniRule"/>
</dbReference>
<dbReference type="GO" id="GO:0008360">
    <property type="term" value="P:regulation of cell shape"/>
    <property type="evidence" value="ECO:0007669"/>
    <property type="project" value="UniProtKB-KW"/>
</dbReference>
<dbReference type="GO" id="GO:0006048">
    <property type="term" value="P:UDP-N-acetylglucosamine biosynthetic process"/>
    <property type="evidence" value="ECO:0007669"/>
    <property type="project" value="UniProtKB-UniPathway"/>
</dbReference>
<dbReference type="CDD" id="cd02540">
    <property type="entry name" value="GT2_GlmU_N_bac"/>
    <property type="match status" value="1"/>
</dbReference>
<dbReference type="CDD" id="cd03353">
    <property type="entry name" value="LbH_GlmU_C"/>
    <property type="match status" value="1"/>
</dbReference>
<dbReference type="Gene3D" id="2.160.10.10">
    <property type="entry name" value="Hexapeptide repeat proteins"/>
    <property type="match status" value="1"/>
</dbReference>
<dbReference type="Gene3D" id="3.90.550.10">
    <property type="entry name" value="Spore Coat Polysaccharide Biosynthesis Protein SpsA, Chain A"/>
    <property type="match status" value="1"/>
</dbReference>
<dbReference type="HAMAP" id="MF_01631">
    <property type="entry name" value="GlmU"/>
    <property type="match status" value="1"/>
</dbReference>
<dbReference type="InterPro" id="IPR005882">
    <property type="entry name" value="Bifunctional_GlmU"/>
</dbReference>
<dbReference type="InterPro" id="IPR050065">
    <property type="entry name" value="GlmU-like"/>
</dbReference>
<dbReference type="InterPro" id="IPR038009">
    <property type="entry name" value="GlmU_C_LbH"/>
</dbReference>
<dbReference type="InterPro" id="IPR001451">
    <property type="entry name" value="Hexapep"/>
</dbReference>
<dbReference type="InterPro" id="IPR018357">
    <property type="entry name" value="Hexapep_transf_CS"/>
</dbReference>
<dbReference type="InterPro" id="IPR025877">
    <property type="entry name" value="MobA-like_NTP_Trfase"/>
</dbReference>
<dbReference type="InterPro" id="IPR029044">
    <property type="entry name" value="Nucleotide-diphossugar_trans"/>
</dbReference>
<dbReference type="InterPro" id="IPR011004">
    <property type="entry name" value="Trimer_LpxA-like_sf"/>
</dbReference>
<dbReference type="NCBIfam" id="TIGR01173">
    <property type="entry name" value="glmU"/>
    <property type="match status" value="1"/>
</dbReference>
<dbReference type="NCBIfam" id="NF010933">
    <property type="entry name" value="PRK14353.1"/>
    <property type="match status" value="1"/>
</dbReference>
<dbReference type="PANTHER" id="PTHR43584:SF3">
    <property type="entry name" value="BIFUNCTIONAL PROTEIN GLMU"/>
    <property type="match status" value="1"/>
</dbReference>
<dbReference type="PANTHER" id="PTHR43584">
    <property type="entry name" value="NUCLEOTIDYL TRANSFERASE"/>
    <property type="match status" value="1"/>
</dbReference>
<dbReference type="Pfam" id="PF00132">
    <property type="entry name" value="Hexapep"/>
    <property type="match status" value="1"/>
</dbReference>
<dbReference type="Pfam" id="PF12804">
    <property type="entry name" value="NTP_transf_3"/>
    <property type="match status" value="1"/>
</dbReference>
<dbReference type="SUPFAM" id="SSF53448">
    <property type="entry name" value="Nucleotide-diphospho-sugar transferases"/>
    <property type="match status" value="1"/>
</dbReference>
<dbReference type="SUPFAM" id="SSF51161">
    <property type="entry name" value="Trimeric LpxA-like enzymes"/>
    <property type="match status" value="1"/>
</dbReference>
<dbReference type="PROSITE" id="PS00101">
    <property type="entry name" value="HEXAPEP_TRANSFERASES"/>
    <property type="match status" value="1"/>
</dbReference>
<proteinExistence type="inferred from homology"/>